<reference key="1">
    <citation type="submission" date="2005-11" db="EMBL/GenBank/DDBJ databases">
        <authorList>
            <consortium name="NIH - Mammalian Gene Collection (MGC) project"/>
        </authorList>
    </citation>
    <scope>NUCLEOTIDE SEQUENCE [LARGE SCALE MRNA]</scope>
    <source>
        <strain>Crossbred X Angus</strain>
        <tissue>Liver</tissue>
    </source>
</reference>
<sequence length="529" mass="60371">MEQEQKLLVSDSNGLTKKESLKNTITGDESKNNLKTVQFSNSKADKERASKWSRSDGPENYKDEDTKEILLTGSQGGKTERDDSYENDSNLGSQRNCTEKEEEQPNHWGWSPGDHTGPAGQQNPSFGDKPYKCSECWKSFSNSSHLRIHQRTHSGEKPYRCSECGKCFSNSSHLIQHLRTHTGEKPYQCGECGKSFSNTSHLIIHERTHTGEKPYKCPECAKSLSSSSHLIQHHRSHTGEKPYECPLCGKCFSHSYVLVEHQRTHTGEKPYKCPDCGKSFSQSSSLIRHQRTHTGEKPYKCPECGKGFGCNSTLIKHQRIHTGEKPYQCIECGKNFSRSSNLVTHQKMHTDDKTYQSSEYEESLSQNYSLIEECRIQPGEKPYKCCECGKSFGLSSHLIRHQRTHTGEKPYRCSECWKTFSQSSTLVIHQRTHTGEKPYKCPDCGECFSQSFNLIRHRRTHMGEKPYKCTDCEKCFSRSAYLSQHRKIHVGKSFESPEVEDFPHEWTWKNYSGEIALIPSFSVPSSSPS</sequence>
<gene>
    <name type="primary">ZNF572</name>
</gene>
<keyword id="KW-0238">DNA-binding</keyword>
<keyword id="KW-1017">Isopeptide bond</keyword>
<keyword id="KW-0479">Metal-binding</keyword>
<keyword id="KW-0539">Nucleus</keyword>
<keyword id="KW-1185">Reference proteome</keyword>
<keyword id="KW-0677">Repeat</keyword>
<keyword id="KW-0804">Transcription</keyword>
<keyword id="KW-0805">Transcription regulation</keyword>
<keyword id="KW-0832">Ubl conjugation</keyword>
<keyword id="KW-0862">Zinc</keyword>
<keyword id="KW-0863">Zinc-finger</keyword>
<protein>
    <recommendedName>
        <fullName>Zinc finger protein 572</fullName>
    </recommendedName>
</protein>
<dbReference type="EMBL" id="BC110014">
    <property type="protein sequence ID" value="AAI10015.1"/>
    <property type="molecule type" value="mRNA"/>
</dbReference>
<dbReference type="RefSeq" id="NP_001070532.1">
    <property type="nucleotide sequence ID" value="NM_001077064.2"/>
</dbReference>
<dbReference type="SMR" id="Q32KN0"/>
<dbReference type="FunCoup" id="Q32KN0">
    <property type="interactions" value="38"/>
</dbReference>
<dbReference type="STRING" id="9913.ENSBTAP00000063339"/>
<dbReference type="PaxDb" id="9913-ENSBTAP00000011959"/>
<dbReference type="KEGG" id="bta:768004"/>
<dbReference type="CTD" id="137209"/>
<dbReference type="eggNOG" id="KOG1721">
    <property type="taxonomic scope" value="Eukaryota"/>
</dbReference>
<dbReference type="InParanoid" id="Q32KN0"/>
<dbReference type="OrthoDB" id="6591996at2759"/>
<dbReference type="Proteomes" id="UP000009136">
    <property type="component" value="Unplaced"/>
</dbReference>
<dbReference type="GO" id="GO:0005634">
    <property type="term" value="C:nucleus"/>
    <property type="evidence" value="ECO:0007669"/>
    <property type="project" value="UniProtKB-SubCell"/>
</dbReference>
<dbReference type="GO" id="GO:0000981">
    <property type="term" value="F:DNA-binding transcription factor activity, RNA polymerase II-specific"/>
    <property type="evidence" value="ECO:0000318"/>
    <property type="project" value="GO_Central"/>
</dbReference>
<dbReference type="GO" id="GO:0000978">
    <property type="term" value="F:RNA polymerase II cis-regulatory region sequence-specific DNA binding"/>
    <property type="evidence" value="ECO:0000318"/>
    <property type="project" value="GO_Central"/>
</dbReference>
<dbReference type="GO" id="GO:0008270">
    <property type="term" value="F:zinc ion binding"/>
    <property type="evidence" value="ECO:0007669"/>
    <property type="project" value="UniProtKB-KW"/>
</dbReference>
<dbReference type="GO" id="GO:0006357">
    <property type="term" value="P:regulation of transcription by RNA polymerase II"/>
    <property type="evidence" value="ECO:0000318"/>
    <property type="project" value="GO_Central"/>
</dbReference>
<dbReference type="FunFam" id="3.30.160.60:FF:000002">
    <property type="entry name" value="Zinc finger protein 1 homolog"/>
    <property type="match status" value="1"/>
</dbReference>
<dbReference type="FunFam" id="3.30.160.60:FF:000725">
    <property type="entry name" value="zinc finger protein 205 isoform X1"/>
    <property type="match status" value="1"/>
</dbReference>
<dbReference type="FunFam" id="3.30.160.60:FF:001158">
    <property type="entry name" value="zinc finger protein 22"/>
    <property type="match status" value="1"/>
</dbReference>
<dbReference type="FunFam" id="3.30.160.60:FF:000269">
    <property type="entry name" value="Zinc finger protein 287"/>
    <property type="match status" value="1"/>
</dbReference>
<dbReference type="FunFam" id="3.30.160.60:FF:002343">
    <property type="entry name" value="Zinc finger protein 33A"/>
    <property type="match status" value="1"/>
</dbReference>
<dbReference type="FunFam" id="3.30.160.60:FF:000135">
    <property type="entry name" value="Zinc finger protein 358"/>
    <property type="match status" value="1"/>
</dbReference>
<dbReference type="FunFam" id="3.30.160.60:FF:000367">
    <property type="entry name" value="Zinc finger protein 572"/>
    <property type="match status" value="1"/>
</dbReference>
<dbReference type="FunFam" id="3.30.160.60:FF:001814">
    <property type="entry name" value="Zinc finger protein 572"/>
    <property type="match status" value="1"/>
</dbReference>
<dbReference type="FunFam" id="3.30.160.60:FF:002481">
    <property type="entry name" value="Zinc finger protein 572"/>
    <property type="match status" value="1"/>
</dbReference>
<dbReference type="FunFam" id="3.30.160.60:FF:000360">
    <property type="entry name" value="zinc finger protein 572"/>
    <property type="match status" value="2"/>
</dbReference>
<dbReference type="FunFam" id="3.30.160.60:FF:000990">
    <property type="entry name" value="zinc finger protein 629 isoform X2"/>
    <property type="match status" value="1"/>
</dbReference>
<dbReference type="Gene3D" id="3.30.160.60">
    <property type="entry name" value="Classic Zinc Finger"/>
    <property type="match status" value="12"/>
</dbReference>
<dbReference type="InterPro" id="IPR050826">
    <property type="entry name" value="Krueppel_C2H2_ZnFinger"/>
</dbReference>
<dbReference type="InterPro" id="IPR036236">
    <property type="entry name" value="Znf_C2H2_sf"/>
</dbReference>
<dbReference type="InterPro" id="IPR013087">
    <property type="entry name" value="Znf_C2H2_type"/>
</dbReference>
<dbReference type="PANTHER" id="PTHR24377">
    <property type="entry name" value="IP01015P-RELATED"/>
    <property type="match status" value="1"/>
</dbReference>
<dbReference type="Pfam" id="PF00096">
    <property type="entry name" value="zf-C2H2"/>
    <property type="match status" value="10"/>
</dbReference>
<dbReference type="Pfam" id="PF13465">
    <property type="entry name" value="zf-H2C2_2"/>
    <property type="match status" value="1"/>
</dbReference>
<dbReference type="SMART" id="SM00355">
    <property type="entry name" value="ZnF_C2H2"/>
    <property type="match status" value="12"/>
</dbReference>
<dbReference type="SUPFAM" id="SSF57667">
    <property type="entry name" value="beta-beta-alpha zinc fingers"/>
    <property type="match status" value="7"/>
</dbReference>
<dbReference type="PROSITE" id="PS00028">
    <property type="entry name" value="ZINC_FINGER_C2H2_1"/>
    <property type="match status" value="12"/>
</dbReference>
<dbReference type="PROSITE" id="PS50157">
    <property type="entry name" value="ZINC_FINGER_C2H2_2"/>
    <property type="match status" value="12"/>
</dbReference>
<name>ZN572_BOVIN</name>
<feature type="chain" id="PRO_0000251222" description="Zinc finger protein 572">
    <location>
        <begin position="1"/>
        <end position="529"/>
    </location>
</feature>
<feature type="zinc finger region" description="C2H2-type 1" evidence="3">
    <location>
        <begin position="131"/>
        <end position="153"/>
    </location>
</feature>
<feature type="zinc finger region" description="C2H2-type 2" evidence="3">
    <location>
        <begin position="159"/>
        <end position="181"/>
    </location>
</feature>
<feature type="zinc finger region" description="C2H2-type 3" evidence="3">
    <location>
        <begin position="187"/>
        <end position="209"/>
    </location>
</feature>
<feature type="zinc finger region" description="C2H2-type 4" evidence="3">
    <location>
        <begin position="215"/>
        <end position="237"/>
    </location>
</feature>
<feature type="zinc finger region" description="C2H2-type 5" evidence="3">
    <location>
        <begin position="243"/>
        <end position="265"/>
    </location>
</feature>
<feature type="zinc finger region" description="C2H2-type 6" evidence="3">
    <location>
        <begin position="271"/>
        <end position="293"/>
    </location>
</feature>
<feature type="zinc finger region" description="C2H2-type 7" evidence="3">
    <location>
        <begin position="299"/>
        <end position="321"/>
    </location>
</feature>
<feature type="zinc finger region" description="C2H2-type 8" evidence="3">
    <location>
        <begin position="327"/>
        <end position="349"/>
    </location>
</feature>
<feature type="zinc finger region" description="C2H2-type 9" evidence="3">
    <location>
        <begin position="383"/>
        <end position="405"/>
    </location>
</feature>
<feature type="zinc finger region" description="C2H2-type 10" evidence="3">
    <location>
        <begin position="411"/>
        <end position="433"/>
    </location>
</feature>
<feature type="zinc finger region" description="C2H2-type 11" evidence="3">
    <location>
        <begin position="439"/>
        <end position="461"/>
    </location>
</feature>
<feature type="zinc finger region" description="C2H2-type 12" evidence="3">
    <location>
        <begin position="467"/>
        <end position="489"/>
    </location>
</feature>
<feature type="region of interest" description="Disordered" evidence="4">
    <location>
        <begin position="1"/>
        <end position="125"/>
    </location>
</feature>
<feature type="compositionally biased region" description="Polar residues" evidence="4">
    <location>
        <begin position="22"/>
        <end position="42"/>
    </location>
</feature>
<feature type="compositionally biased region" description="Basic and acidic residues" evidence="4">
    <location>
        <begin position="43"/>
        <end position="68"/>
    </location>
</feature>
<feature type="compositionally biased region" description="Polar residues" evidence="4">
    <location>
        <begin position="87"/>
        <end position="96"/>
    </location>
</feature>
<feature type="cross-link" description="Glycyl lysine isopeptide (Lys-Gly) (interchain with G-Cter in SUMO2)" evidence="2">
    <location>
        <position position="6"/>
    </location>
</feature>
<comment type="function">
    <text evidence="1">May be involved in transcriptional regulation.</text>
</comment>
<comment type="subcellular location">
    <subcellularLocation>
        <location evidence="5">Nucleus</location>
    </subcellularLocation>
</comment>
<comment type="similarity">
    <text evidence="5">Belongs to the krueppel C2H2-type zinc-finger protein family.</text>
</comment>
<accession>Q32KN0</accession>
<evidence type="ECO:0000250" key="1"/>
<evidence type="ECO:0000250" key="2">
    <source>
        <dbReference type="UniProtKB" id="Q7Z3I7"/>
    </source>
</evidence>
<evidence type="ECO:0000255" key="3">
    <source>
        <dbReference type="PROSITE-ProRule" id="PRU00042"/>
    </source>
</evidence>
<evidence type="ECO:0000256" key="4">
    <source>
        <dbReference type="SAM" id="MobiDB-lite"/>
    </source>
</evidence>
<evidence type="ECO:0000305" key="5"/>
<organism>
    <name type="scientific">Bos taurus</name>
    <name type="common">Bovine</name>
    <dbReference type="NCBI Taxonomy" id="9913"/>
    <lineage>
        <taxon>Eukaryota</taxon>
        <taxon>Metazoa</taxon>
        <taxon>Chordata</taxon>
        <taxon>Craniata</taxon>
        <taxon>Vertebrata</taxon>
        <taxon>Euteleostomi</taxon>
        <taxon>Mammalia</taxon>
        <taxon>Eutheria</taxon>
        <taxon>Laurasiatheria</taxon>
        <taxon>Artiodactyla</taxon>
        <taxon>Ruminantia</taxon>
        <taxon>Pecora</taxon>
        <taxon>Bovidae</taxon>
        <taxon>Bovinae</taxon>
        <taxon>Bos</taxon>
    </lineage>
</organism>
<proteinExistence type="evidence at transcript level"/>